<comment type="function">
    <text>Light-harvesting photosynthetic bile pigment-protein from the phycobiliprotein complex.</text>
</comment>
<comment type="subunit">
    <text evidence="1">Heterodimer of an alpha and a beta chain.</text>
</comment>
<comment type="subcellular location">
    <subcellularLocation>
        <location evidence="1">Plastid</location>
        <location evidence="1">Chloroplast thylakoid membrane</location>
        <topology evidence="1">Peripheral membrane protein</topology>
        <orientation evidence="1">Stromal side</orientation>
    </subcellularLocation>
    <text evidence="1">Forms the periphery of the phycobilisome rod.</text>
</comment>
<comment type="PTM">
    <text evidence="1">Contains two covalently linked bilin chromophores.</text>
</comment>
<comment type="similarity">
    <text evidence="2">Belongs to the phycobiliprotein family.</text>
</comment>
<organism>
    <name type="scientific">Lophosiphonia boldii</name>
    <name type="common">Red alga</name>
    <name type="synonym">Polysiphonia boldii</name>
    <dbReference type="NCBI Taxonomy" id="2805"/>
    <lineage>
        <taxon>Eukaryota</taxon>
        <taxon>Rhodophyta</taxon>
        <taxon>Florideophyceae</taxon>
        <taxon>Rhodymeniophycidae</taxon>
        <taxon>Ceramiales</taxon>
        <taxon>Rhodomelaceae</taxon>
        <taxon>Polysiphonioideae</taxon>
        <taxon>Lophosiphonia</taxon>
    </lineage>
</organism>
<sequence>MKSVITTTISAADAAGRYPSTSDLQSVQGNIQRAAARLEAAEKLGSNHEAVVKEAGDACFSKYGYLKNPGEAGENQEKINKCYRDIDHYMRLINYTLVVGGTGPLDEWGIAGAREVYRTLNLPSAAYIAAFVFTRDRLCIPRDMSAQAGVEFCTALDYLINSLS</sequence>
<geneLocation type="chloroplast"/>
<protein>
    <recommendedName>
        <fullName>R-phycoerythrin alpha chain</fullName>
    </recommendedName>
</protein>
<gene>
    <name type="primary">cpeA</name>
    <name type="synonym">rpeA</name>
</gene>
<reference key="1">
    <citation type="journal article" date="1993" name="Plant Mol. Biol.">
        <title>Organization, expression and nucleotide sequence of the operon encoding R-phycoerythrin alpha and beta subunits from the red alga Polysiphonia boldii.</title>
        <authorList>
            <person name="Roell M.K."/>
            <person name="Morse D.E."/>
        </authorList>
    </citation>
    <scope>NUCLEOTIDE SEQUENCE [GENOMIC DNA]</scope>
</reference>
<feature type="chain" id="PRO_0000199175" description="R-phycoerythrin alpha chain">
    <location>
        <begin position="1"/>
        <end position="164"/>
    </location>
</feature>
<feature type="binding site" description="covalent" evidence="1">
    <location>
        <position position="82"/>
    </location>
    <ligand>
        <name>(2R,3E)-phycoerythrobilin</name>
        <dbReference type="ChEBI" id="CHEBI:85276"/>
        <label>1</label>
    </ligand>
</feature>
<feature type="binding site" description="covalent" evidence="1">
    <location>
        <position position="139"/>
    </location>
    <ligand>
        <name>(2R,3E)-phycoerythrobilin</name>
        <dbReference type="ChEBI" id="CHEBI:85276"/>
        <label>2</label>
    </ligand>
</feature>
<keyword id="KW-0042">Antenna complex</keyword>
<keyword id="KW-0089">Bile pigment</keyword>
<keyword id="KW-0150">Chloroplast</keyword>
<keyword id="KW-0157">Chromophore</keyword>
<keyword id="KW-0249">Electron transport</keyword>
<keyword id="KW-0472">Membrane</keyword>
<keyword id="KW-0602">Photosynthesis</keyword>
<keyword id="KW-0605">Phycobilisome</keyword>
<keyword id="KW-0934">Plastid</keyword>
<keyword id="KW-0793">Thylakoid</keyword>
<keyword id="KW-0813">Transport</keyword>
<dbReference type="EMBL" id="Z14094">
    <property type="protein sequence ID" value="CAA78476.1"/>
    <property type="molecule type" value="Genomic_DNA"/>
</dbReference>
<dbReference type="PIR" id="S30931">
    <property type="entry name" value="S30931"/>
</dbReference>
<dbReference type="SMR" id="Q01921"/>
<dbReference type="GO" id="GO:0009535">
    <property type="term" value="C:chloroplast thylakoid membrane"/>
    <property type="evidence" value="ECO:0007669"/>
    <property type="project" value="UniProtKB-SubCell"/>
</dbReference>
<dbReference type="GO" id="GO:0030089">
    <property type="term" value="C:phycobilisome"/>
    <property type="evidence" value="ECO:0007669"/>
    <property type="project" value="UniProtKB-KW"/>
</dbReference>
<dbReference type="GO" id="GO:0015979">
    <property type="term" value="P:photosynthesis"/>
    <property type="evidence" value="ECO:0007669"/>
    <property type="project" value="UniProtKB-KW"/>
</dbReference>
<dbReference type="CDD" id="cd14769">
    <property type="entry name" value="PE_alpha"/>
    <property type="match status" value="1"/>
</dbReference>
<dbReference type="Gene3D" id="1.10.490.20">
    <property type="entry name" value="Phycocyanins"/>
    <property type="match status" value="1"/>
</dbReference>
<dbReference type="InterPro" id="IPR009050">
    <property type="entry name" value="Globin-like_sf"/>
</dbReference>
<dbReference type="InterPro" id="IPR012128">
    <property type="entry name" value="Phycobilisome_asu/bsu"/>
</dbReference>
<dbReference type="InterPro" id="IPR038719">
    <property type="entry name" value="Phycobilisome_asu/bsu_sf"/>
</dbReference>
<dbReference type="PANTHER" id="PTHR34011:SF4">
    <property type="entry name" value="C-PHYCOCYANIN ALPHA SUBUNIT"/>
    <property type="match status" value="1"/>
</dbReference>
<dbReference type="PANTHER" id="PTHR34011">
    <property type="entry name" value="PHYCOBILISOME 32.1 KDA LINKER POLYPEPTIDE, PHYCOCYANIN-ASSOCIATED, ROD 2-RELATED"/>
    <property type="match status" value="1"/>
</dbReference>
<dbReference type="Pfam" id="PF00502">
    <property type="entry name" value="Phycobilisome"/>
    <property type="match status" value="1"/>
</dbReference>
<dbReference type="PIRSF" id="PIRSF000081">
    <property type="entry name" value="Phycocyanin"/>
    <property type="match status" value="1"/>
</dbReference>
<dbReference type="SUPFAM" id="SSF46458">
    <property type="entry name" value="Globin-like"/>
    <property type="match status" value="1"/>
</dbReference>
<proteinExistence type="inferred from homology"/>
<name>PHEA_LOPBO</name>
<accession>Q01921</accession>
<evidence type="ECO:0000250" key="1"/>
<evidence type="ECO:0000305" key="2"/>